<gene>
    <name type="primary">PNPLA6</name>
    <name type="synonym">NTE</name>
</gene>
<comment type="function">
    <text evidence="2">Phospholipase B that deacylates intracellular phosphatidylcholine (PtdCho), generating glycerophosphocholine (GroPtdCho). This deacylation occurs at both sn-2 and sn-1 positions of PtdCho. Catalyzes the hydrolysis of several naturally occurring membrane-associated lipids. Hydrolyzes lysophospholipids and monoacylglycerols, preferring the 1-acyl to the 2-acyl isomer. Does not catalyze hydrolysis of di- or triacylglycerols or fatty acid amides.</text>
</comment>
<comment type="catalytic activity">
    <reaction evidence="1">
        <text>a 1-acyl-sn-glycero-3-phosphocholine + H2O = sn-glycerol 3-phosphocholine + a fatty acid + H(+)</text>
        <dbReference type="Rhea" id="RHEA:15177"/>
        <dbReference type="ChEBI" id="CHEBI:15377"/>
        <dbReference type="ChEBI" id="CHEBI:15378"/>
        <dbReference type="ChEBI" id="CHEBI:16870"/>
        <dbReference type="ChEBI" id="CHEBI:28868"/>
        <dbReference type="ChEBI" id="CHEBI:58168"/>
        <dbReference type="EC" id="3.1.1.5"/>
    </reaction>
    <physiologicalReaction direction="left-to-right" evidence="1">
        <dbReference type="Rhea" id="RHEA:15178"/>
    </physiologicalReaction>
</comment>
<comment type="catalytic activity">
    <reaction evidence="1 2">
        <text>1-hexadecanoyl-sn-glycero-3-phosphocholine + H2O = sn-glycerol 3-phosphocholine + hexadecanoate + H(+)</text>
        <dbReference type="Rhea" id="RHEA:40435"/>
        <dbReference type="ChEBI" id="CHEBI:7896"/>
        <dbReference type="ChEBI" id="CHEBI:15377"/>
        <dbReference type="ChEBI" id="CHEBI:15378"/>
        <dbReference type="ChEBI" id="CHEBI:16870"/>
        <dbReference type="ChEBI" id="CHEBI:72998"/>
    </reaction>
    <physiologicalReaction direction="left-to-right" evidence="1 2">
        <dbReference type="Rhea" id="RHEA:40436"/>
    </physiologicalReaction>
</comment>
<comment type="catalytic activity">
    <reaction evidence="2">
        <text>1-(9Z-octadecenoyl)-sn-glycero-3-phosphocholine + H2O = sn-glycerol 3-phosphocholine + (9Z)-octadecenoate + H(+)</text>
        <dbReference type="Rhea" id="RHEA:40807"/>
        <dbReference type="ChEBI" id="CHEBI:15377"/>
        <dbReference type="ChEBI" id="CHEBI:15378"/>
        <dbReference type="ChEBI" id="CHEBI:16870"/>
        <dbReference type="ChEBI" id="CHEBI:28610"/>
        <dbReference type="ChEBI" id="CHEBI:30823"/>
    </reaction>
    <physiologicalReaction direction="left-to-right" evidence="2">
        <dbReference type="Rhea" id="RHEA:40808"/>
    </physiologicalReaction>
</comment>
<comment type="catalytic activity">
    <reaction evidence="2">
        <text>1-hexadecanoylglycerol + H2O = glycerol + hexadecanoate + H(+)</text>
        <dbReference type="Rhea" id="RHEA:39959"/>
        <dbReference type="ChEBI" id="CHEBI:7896"/>
        <dbReference type="ChEBI" id="CHEBI:15377"/>
        <dbReference type="ChEBI" id="CHEBI:15378"/>
        <dbReference type="ChEBI" id="CHEBI:17754"/>
        <dbReference type="ChEBI" id="CHEBI:69081"/>
    </reaction>
    <physiologicalReaction direction="left-to-right" evidence="2">
        <dbReference type="Rhea" id="RHEA:39960"/>
    </physiologicalReaction>
</comment>
<comment type="catalytic activity">
    <reaction evidence="2">
        <text>2-hexadecanoylglycerol + H2O = glycerol + hexadecanoate + H(+)</text>
        <dbReference type="Rhea" id="RHEA:39963"/>
        <dbReference type="ChEBI" id="CHEBI:7896"/>
        <dbReference type="ChEBI" id="CHEBI:15377"/>
        <dbReference type="ChEBI" id="CHEBI:15378"/>
        <dbReference type="ChEBI" id="CHEBI:17754"/>
        <dbReference type="ChEBI" id="CHEBI:75455"/>
    </reaction>
    <physiologicalReaction direction="left-to-right" evidence="2">
        <dbReference type="Rhea" id="RHEA:39964"/>
    </physiologicalReaction>
</comment>
<comment type="catalytic activity">
    <reaction evidence="2">
        <text>1-(9Z-octadecenoyl)-glycerol + H2O = glycerol + (9Z)-octadecenoate + H(+)</text>
        <dbReference type="Rhea" id="RHEA:38487"/>
        <dbReference type="ChEBI" id="CHEBI:15377"/>
        <dbReference type="ChEBI" id="CHEBI:15378"/>
        <dbReference type="ChEBI" id="CHEBI:17754"/>
        <dbReference type="ChEBI" id="CHEBI:30823"/>
        <dbReference type="ChEBI" id="CHEBI:75342"/>
    </reaction>
    <physiologicalReaction direction="left-to-right" evidence="2">
        <dbReference type="Rhea" id="RHEA:38488"/>
    </physiologicalReaction>
</comment>
<comment type="catalytic activity">
    <reaction evidence="2">
        <text>2-(9Z-octadecenoyl)-glycerol + H2O = glycerol + (9Z)-octadecenoate + H(+)</text>
        <dbReference type="Rhea" id="RHEA:38491"/>
        <dbReference type="ChEBI" id="CHEBI:15377"/>
        <dbReference type="ChEBI" id="CHEBI:15378"/>
        <dbReference type="ChEBI" id="CHEBI:17754"/>
        <dbReference type="ChEBI" id="CHEBI:30823"/>
        <dbReference type="ChEBI" id="CHEBI:73990"/>
    </reaction>
    <physiologicalReaction direction="left-to-right" evidence="2">
        <dbReference type="Rhea" id="RHEA:38492"/>
    </physiologicalReaction>
</comment>
<comment type="catalytic activity">
    <reaction evidence="2">
        <text>2-(5Z,8Z,11Z,14Z-eicosatetraenoyl)-glycerol + H2O = glycerol + (5Z,8Z,11Z,14Z)-eicosatetraenoate + H(+)</text>
        <dbReference type="Rhea" id="RHEA:26132"/>
        <dbReference type="ChEBI" id="CHEBI:15377"/>
        <dbReference type="ChEBI" id="CHEBI:15378"/>
        <dbReference type="ChEBI" id="CHEBI:17754"/>
        <dbReference type="ChEBI" id="CHEBI:32395"/>
        <dbReference type="ChEBI" id="CHEBI:52392"/>
    </reaction>
    <physiologicalReaction direction="left-to-right" evidence="2">
        <dbReference type="Rhea" id="RHEA:26133"/>
    </physiologicalReaction>
</comment>
<comment type="catalytic activity">
    <reaction evidence="1">
        <text>1-hexadecanoyl-sn-glycero-3-phosphate + H2O = sn-glycerol 3-phosphate + hexadecanoate + H(+)</text>
        <dbReference type="Rhea" id="RHEA:49092"/>
        <dbReference type="ChEBI" id="CHEBI:7896"/>
        <dbReference type="ChEBI" id="CHEBI:15377"/>
        <dbReference type="ChEBI" id="CHEBI:15378"/>
        <dbReference type="ChEBI" id="CHEBI:57518"/>
        <dbReference type="ChEBI" id="CHEBI:57597"/>
    </reaction>
    <physiologicalReaction direction="left-to-right" evidence="1">
        <dbReference type="Rhea" id="RHEA:49093"/>
    </physiologicalReaction>
</comment>
<comment type="activity regulation">
    <text evidence="2">Inhibited by a series a OPs such as mipafox (MPX), phenyl saligenin phosphate (PSP), phenyl dipentyl phosphinate (PDPP), diisopropyl fluorophosphate and paraoxon.</text>
</comment>
<comment type="subcellular location">
    <subcellularLocation>
        <location evidence="2">Endoplasmic reticulum membrane</location>
        <topology evidence="2">Single-pass type III membrane protein</topology>
    </subcellularLocation>
</comment>
<comment type="PTM">
    <text evidence="2">Glycosylated.</text>
</comment>
<comment type="similarity">
    <text evidence="6">Belongs to the NTE family.</text>
</comment>
<dbReference type="EC" id="3.1.1.5" evidence="2"/>
<dbReference type="EMBL" id="CR857832">
    <property type="protein sequence ID" value="CAH90087.1"/>
    <property type="molecule type" value="mRNA"/>
</dbReference>
<dbReference type="RefSeq" id="NP_001124999.1">
    <property type="nucleotide sequence ID" value="NM_001131527.1"/>
</dbReference>
<dbReference type="SMR" id="Q5RDS0"/>
<dbReference type="FunCoup" id="Q5RDS0">
    <property type="interactions" value="2028"/>
</dbReference>
<dbReference type="STRING" id="9601.ENSPPYP00000010625"/>
<dbReference type="GlyCosmos" id="Q5RDS0">
    <property type="glycosylation" value="1 site, No reported glycans"/>
</dbReference>
<dbReference type="GeneID" id="100453292"/>
<dbReference type="KEGG" id="pon:100453292"/>
<dbReference type="CTD" id="10908"/>
<dbReference type="eggNOG" id="KOG2968">
    <property type="taxonomic scope" value="Eukaryota"/>
</dbReference>
<dbReference type="InParanoid" id="Q5RDS0"/>
<dbReference type="OrthoDB" id="421051at2759"/>
<dbReference type="Proteomes" id="UP000001595">
    <property type="component" value="Unplaced"/>
</dbReference>
<dbReference type="GO" id="GO:0005789">
    <property type="term" value="C:endoplasmic reticulum membrane"/>
    <property type="evidence" value="ECO:0007669"/>
    <property type="project" value="UniProtKB-SubCell"/>
</dbReference>
<dbReference type="GO" id="GO:0004622">
    <property type="term" value="F:lysophospholipase activity"/>
    <property type="evidence" value="ECO:0000250"/>
    <property type="project" value="UniProtKB"/>
</dbReference>
<dbReference type="GO" id="GO:0016042">
    <property type="term" value="P:lipid catabolic process"/>
    <property type="evidence" value="ECO:0007669"/>
    <property type="project" value="UniProtKB-KW"/>
</dbReference>
<dbReference type="GO" id="GO:0046470">
    <property type="term" value="P:phosphatidylcholine metabolic process"/>
    <property type="evidence" value="ECO:0007669"/>
    <property type="project" value="InterPro"/>
</dbReference>
<dbReference type="CDD" id="cd00038">
    <property type="entry name" value="CAP_ED"/>
    <property type="match status" value="3"/>
</dbReference>
<dbReference type="CDD" id="cd07225">
    <property type="entry name" value="Pat_PNPLA6_PNPLA7"/>
    <property type="match status" value="1"/>
</dbReference>
<dbReference type="FunFam" id="2.60.120.10:FF:000010">
    <property type="entry name" value="neuropathy target esterase isoform X1"/>
    <property type="match status" value="1"/>
</dbReference>
<dbReference type="FunFam" id="2.60.120.10:FF:000012">
    <property type="entry name" value="neuropathy target esterase isoform X2"/>
    <property type="match status" value="1"/>
</dbReference>
<dbReference type="FunFam" id="3.40.1090.10:FF:000001">
    <property type="entry name" value="neuropathy target esterase isoform X2"/>
    <property type="match status" value="1"/>
</dbReference>
<dbReference type="FunFam" id="2.60.120.10:FF:000022">
    <property type="entry name" value="Patatin like phospholipase domain containing 7"/>
    <property type="match status" value="1"/>
</dbReference>
<dbReference type="Gene3D" id="3.40.1090.10">
    <property type="entry name" value="Cytosolic phospholipase A2 catalytic domain"/>
    <property type="match status" value="1"/>
</dbReference>
<dbReference type="Gene3D" id="2.60.120.10">
    <property type="entry name" value="Jelly Rolls"/>
    <property type="match status" value="3"/>
</dbReference>
<dbReference type="InterPro" id="IPR016035">
    <property type="entry name" value="Acyl_Trfase/lysoPLipase"/>
</dbReference>
<dbReference type="InterPro" id="IPR000595">
    <property type="entry name" value="cNMP-bd_dom"/>
</dbReference>
<dbReference type="InterPro" id="IPR018490">
    <property type="entry name" value="cNMP-bd_dom_sf"/>
</dbReference>
<dbReference type="InterPro" id="IPR001423">
    <property type="entry name" value="LysoPLipase_patatin_CS"/>
</dbReference>
<dbReference type="InterPro" id="IPR050301">
    <property type="entry name" value="NTE"/>
</dbReference>
<dbReference type="InterPro" id="IPR056556">
    <property type="entry name" value="NTE1_P-loop_dom"/>
</dbReference>
<dbReference type="InterPro" id="IPR002641">
    <property type="entry name" value="PNPLA_dom"/>
</dbReference>
<dbReference type="InterPro" id="IPR014710">
    <property type="entry name" value="RmlC-like_jellyroll"/>
</dbReference>
<dbReference type="PANTHER" id="PTHR14226">
    <property type="entry name" value="NEUROPATHY TARGET ESTERASE/SWISS CHEESE D.MELANOGASTER"/>
    <property type="match status" value="1"/>
</dbReference>
<dbReference type="PANTHER" id="PTHR14226:SF26">
    <property type="entry name" value="PATATIN-LIKE PHOSPHOLIPASE DOMAIN-CONTAINING PROTEIN 6"/>
    <property type="match status" value="1"/>
</dbReference>
<dbReference type="Pfam" id="PF00027">
    <property type="entry name" value="cNMP_binding"/>
    <property type="match status" value="3"/>
</dbReference>
<dbReference type="Pfam" id="PF24179">
    <property type="entry name" value="NTE_Ploop"/>
    <property type="match status" value="1"/>
</dbReference>
<dbReference type="Pfam" id="PF01734">
    <property type="entry name" value="Patatin"/>
    <property type="match status" value="1"/>
</dbReference>
<dbReference type="SMART" id="SM00100">
    <property type="entry name" value="cNMP"/>
    <property type="match status" value="3"/>
</dbReference>
<dbReference type="SUPFAM" id="SSF51206">
    <property type="entry name" value="cAMP-binding domain-like"/>
    <property type="match status" value="3"/>
</dbReference>
<dbReference type="SUPFAM" id="SSF52151">
    <property type="entry name" value="FabD/lysophospholipase-like"/>
    <property type="match status" value="1"/>
</dbReference>
<dbReference type="PROSITE" id="PS50042">
    <property type="entry name" value="CNMP_BINDING_3"/>
    <property type="match status" value="3"/>
</dbReference>
<dbReference type="PROSITE" id="PS51635">
    <property type="entry name" value="PNPLA"/>
    <property type="match status" value="1"/>
</dbReference>
<dbReference type="PROSITE" id="PS01237">
    <property type="entry name" value="UPF0028"/>
    <property type="match status" value="1"/>
</dbReference>
<evidence type="ECO:0000250" key="1">
    <source>
        <dbReference type="UniProtKB" id="Q3TRM4"/>
    </source>
</evidence>
<evidence type="ECO:0000250" key="2">
    <source>
        <dbReference type="UniProtKB" id="Q8IY17"/>
    </source>
</evidence>
<evidence type="ECO:0000255" key="3"/>
<evidence type="ECO:0000255" key="4">
    <source>
        <dbReference type="PROSITE-ProRule" id="PRU01161"/>
    </source>
</evidence>
<evidence type="ECO:0000256" key="5">
    <source>
        <dbReference type="SAM" id="MobiDB-lite"/>
    </source>
</evidence>
<evidence type="ECO:0000305" key="6"/>
<name>PLPL6_PONAB</name>
<sequence>MGTSSHGLATNSSGAKVAERDGFQDVPAPGEGAAGRICGAQPVPFVPQVLGVMIGAGVAVVVTAVLILLVVRRLRVPKTPAPDGPRYRFRKRDKVLFYGRKIMRKVSQSTSSLVDTSVSATSRPRMKKKLKMLNIAKKILRIQKETPTLQRKEPPPAVLEADLTEGDLANSHLPSEVLYMFKNVRVLGHFEKPLFLELCRHMVFQRLGQGDYVFRPGQPDASIYVVQDGLLELCLPGPDGKECVVKEVVPGDSVNSLLSILDVITGHQHPQRTVSARAARDSTVLRLPVEAFSAVFAKYPESLVRVVQIIMVRLQRVTFLALHNYLGLTNELFSHEIQPLRLFPSPGLPTRTSPVRGSKRMVSTSATDEPRETPGRPPDPTGAPLPGPTGDPVKPTSLETPSAPLLSRCVSMPGDISGLQGGPRSDFDMAYERGRISVSLQEGASGGSLAAPARTPTQEPREQPAGACEYSYCEDESATGGCPFGPYQGRQTSSIFEAAKRELAKLMRIEDPSLLNSRVLLHHAKAGTIIARQGDQDVSLHFVLWGCLHVYQHMIDKAEDVCLFVAQPGELVGQLAVLTGEPLIFTLRAQRDCTFLRISKSDFYEIMRAQPSVVLSAAHTVAARMSPFVRQMDFAIDWTAVEAGRALYRQGDRSDCTYIVLNGRLRSVIQRGSGKKELVGEYGRGDLIGVVEALTRQPRATTVHAVRDTELAKLPEGTLGHIKRRHPQVVTRLIHLLSQKILGNLQQLQGPFPGSGLGVPPHSELTNPASNLATVAVLPVCAEVPMVAFTLELQHALQAIGPTLLLNSDIIRARLGASALDSIQEFRLSGWLAQQEDAHRIVLYQTDASLTPWTVRCLRQADCILIVGLGDQEPTLGQLEQMLENTAVRALKQLVLLHREEGAGPTRTVEWLNMRSWCSGHPHLRCPRRLFSRRSPAKLHELYEKVFSRRADRHSDFSRLARVLTGNTIALVLGGGGARGCSHIGVLKALEEAGVPVDLVGGTSIGSFIGALYAEERSASRTKQRAREWAKSMTSVLEPVLDLTYPVTSMFTGSAFNRSIHRVFQDKQIEDLWLPYFNVTTDITASAMRVHKDGSLWRYVRASMTLSGYLPPLCDPKDGHLLMDGGYINNLPADIARSMGAKTVIAIDVGSQDETDLSTYGDSLSGWWLLWKRLNPWADKVKVPDMAEIQSRLAYVSCVRQLEVVKSSSYCEYLRPPIDCFKTMDFGKFDQVYDVGYQYGKAVFGGWSRGNVIEKMLTDRRSTDLNESRRADVLAYPSSGFTDLAEIVSRIEPPTSYVSDGCADGEESDCLTEYEEDAGPDCSRDEGGSPEGASPSTASEMEEEKSILRQRRCLPQEPPGSATDA</sequence>
<keyword id="KW-0256">Endoplasmic reticulum</keyword>
<keyword id="KW-0325">Glycoprotein</keyword>
<keyword id="KW-0378">Hydrolase</keyword>
<keyword id="KW-0442">Lipid degradation</keyword>
<keyword id="KW-0443">Lipid metabolism</keyword>
<keyword id="KW-0472">Membrane</keyword>
<keyword id="KW-0597">Phosphoprotein</keyword>
<keyword id="KW-1185">Reference proteome</keyword>
<keyword id="KW-0677">Repeat</keyword>
<keyword id="KW-0812">Transmembrane</keyword>
<keyword id="KW-1133">Transmembrane helix</keyword>
<protein>
    <recommendedName>
        <fullName evidence="6">Patatin-like phospholipase domain-containing protein 6</fullName>
    </recommendedName>
    <alternativeName>
        <fullName>Neuropathy target esterase</fullName>
        <ecNumber evidence="2">3.1.1.5</ecNumber>
    </alternativeName>
</protein>
<accession>Q5RDS0</accession>
<proteinExistence type="evidence at transcript level"/>
<organism>
    <name type="scientific">Pongo abelii</name>
    <name type="common">Sumatran orangutan</name>
    <name type="synonym">Pongo pygmaeus abelii</name>
    <dbReference type="NCBI Taxonomy" id="9601"/>
    <lineage>
        <taxon>Eukaryota</taxon>
        <taxon>Metazoa</taxon>
        <taxon>Chordata</taxon>
        <taxon>Craniata</taxon>
        <taxon>Vertebrata</taxon>
        <taxon>Euteleostomi</taxon>
        <taxon>Mammalia</taxon>
        <taxon>Eutheria</taxon>
        <taxon>Euarchontoglires</taxon>
        <taxon>Primates</taxon>
        <taxon>Haplorrhini</taxon>
        <taxon>Catarrhini</taxon>
        <taxon>Hominidae</taxon>
        <taxon>Pongo</taxon>
    </lineage>
</organism>
<feature type="chain" id="PRO_0000292201" description="Patatin-like phospholipase domain-containing protein 6">
    <location>
        <begin position="1"/>
        <end position="1365"/>
    </location>
</feature>
<feature type="topological domain" description="Lumenal" evidence="3">
    <location>
        <begin position="1"/>
        <end position="50"/>
    </location>
</feature>
<feature type="transmembrane region" description="Helical" evidence="3">
    <location>
        <begin position="51"/>
        <end position="71"/>
    </location>
</feature>
<feature type="topological domain" description="Cytoplasmic" evidence="3">
    <location>
        <begin position="72"/>
        <end position="1365"/>
    </location>
</feature>
<feature type="domain" description="PNPLA" evidence="4">
    <location>
        <begin position="971"/>
        <end position="1137"/>
    </location>
</feature>
<feature type="region of interest" description="Disordered" evidence="5">
    <location>
        <begin position="343"/>
        <end position="427"/>
    </location>
</feature>
<feature type="region of interest" description="Disordered" evidence="5">
    <location>
        <begin position="441"/>
        <end position="463"/>
    </location>
</feature>
<feature type="region of interest" description="Disordered" evidence="5">
    <location>
        <begin position="1296"/>
        <end position="1365"/>
    </location>
</feature>
<feature type="short sequence motif" description="GXGXXG" evidence="4">
    <location>
        <begin position="975"/>
        <end position="980"/>
    </location>
</feature>
<feature type="short sequence motif" description="GXSXG" evidence="4">
    <location>
        <begin position="1002"/>
        <end position="1006"/>
    </location>
</feature>
<feature type="short sequence motif" description="DGA/G" evidence="4">
    <location>
        <begin position="1124"/>
        <end position="1126"/>
    </location>
</feature>
<feature type="compositionally biased region" description="Polar residues" evidence="5">
    <location>
        <begin position="350"/>
        <end position="367"/>
    </location>
</feature>
<feature type="compositionally biased region" description="Pro residues" evidence="5">
    <location>
        <begin position="375"/>
        <end position="389"/>
    </location>
</feature>
<feature type="compositionally biased region" description="Acidic residues" evidence="5">
    <location>
        <begin position="1303"/>
        <end position="1319"/>
    </location>
</feature>
<feature type="active site" description="Nucleophile" evidence="4">
    <location>
        <position position="1004"/>
    </location>
</feature>
<feature type="active site" description="Proton acceptor" evidence="4">
    <location>
        <position position="1124"/>
    </location>
</feature>
<feature type="binding site">
    <location>
        <begin position="186"/>
        <end position="313"/>
    </location>
    <ligand>
        <name>a nucleoside 3',5'-cyclic phosphate</name>
        <dbReference type="ChEBI" id="CHEBI:58464"/>
        <label>1</label>
    </ligand>
</feature>
<feature type="binding site">
    <location>
        <begin position="502"/>
        <end position="624"/>
    </location>
    <ligand>
        <name>a nucleoside 3',5'-cyclic phosphate</name>
        <dbReference type="ChEBI" id="CHEBI:58464"/>
        <label>2</label>
    </ligand>
</feature>
<feature type="binding site">
    <location>
        <begin position="620"/>
        <end position="740"/>
    </location>
    <ligand>
        <name>a nucleoside 3',5'-cyclic phosphate</name>
        <dbReference type="ChEBI" id="CHEBI:58464"/>
        <label>3</label>
    </ligand>
</feature>
<feature type="modified residue" description="Phosphoserine" evidence="2">
    <location>
        <position position="345"/>
    </location>
</feature>
<feature type="modified residue" description="Phosphothreonine" evidence="2">
    <location>
        <position position="352"/>
    </location>
</feature>
<feature type="modified residue" description="Phosphoserine" evidence="2">
    <location>
        <position position="353"/>
    </location>
</feature>
<feature type="modified residue" description="Phosphoserine" evidence="2">
    <location>
        <position position="363"/>
    </location>
</feature>
<feature type="modified residue" description="Phosphoserine" evidence="2">
    <location>
        <position position="411"/>
    </location>
</feature>
<feature type="modified residue" description="Phosphothreonine" evidence="2">
    <location>
        <position position="455"/>
    </location>
</feature>
<feature type="glycosylation site" description="N-linked (GlcNAc...) asparagine" evidence="3">
    <location>
        <position position="11"/>
    </location>
</feature>
<reference key="1">
    <citation type="submission" date="2004-11" db="EMBL/GenBank/DDBJ databases">
        <authorList>
            <consortium name="The German cDNA consortium"/>
        </authorList>
    </citation>
    <scope>NUCLEOTIDE SEQUENCE [LARGE SCALE MRNA]</scope>
    <source>
        <tissue>Brain cortex</tissue>
    </source>
</reference>